<name>MACBH_PSEF5</name>
<feature type="chain" id="PRO_0000269957" description="Probable export ATP-binding/permease protein PFL_2149">
    <location>
        <begin position="1"/>
        <end position="652"/>
    </location>
</feature>
<feature type="transmembrane region" description="Helical" evidence="2">
    <location>
        <begin position="251"/>
        <end position="271"/>
    </location>
</feature>
<feature type="transmembrane region" description="Helical" evidence="2">
    <location>
        <begin position="277"/>
        <end position="297"/>
    </location>
</feature>
<feature type="transmembrane region" description="Helical" evidence="2">
    <location>
        <begin position="525"/>
        <end position="545"/>
    </location>
</feature>
<feature type="transmembrane region" description="Helical" evidence="2">
    <location>
        <begin position="586"/>
        <end position="606"/>
    </location>
</feature>
<feature type="transmembrane region" description="Helical" evidence="2">
    <location>
        <begin position="615"/>
        <end position="635"/>
    </location>
</feature>
<feature type="domain" description="ABC transporter" evidence="3">
    <location>
        <begin position="6"/>
        <end position="244"/>
    </location>
</feature>
<feature type="binding site" evidence="3">
    <location>
        <begin position="42"/>
        <end position="49"/>
    </location>
    <ligand>
        <name>ATP</name>
        <dbReference type="ChEBI" id="CHEBI:30616"/>
    </ligand>
</feature>
<comment type="function">
    <text evidence="1">Probably part of a tripartite efflux system.</text>
</comment>
<comment type="subunit">
    <text evidence="1">Probably part of a tripartite efflux system, which is composed of an inner membrane transporter, a periplasmic membrane fusion protein, and an outer membrane component.</text>
</comment>
<comment type="subcellular location">
    <subcellularLocation>
        <location evidence="1">Cell inner membrane</location>
        <topology evidence="2">Multi-pass membrane protein</topology>
    </subcellularLocation>
</comment>
<comment type="similarity">
    <text evidence="4">Belongs to the ABC transporter superfamily. Macrolide exporter (TC 3.A.1.122) family.</text>
</comment>
<dbReference type="EC" id="7.6.2.-" evidence="1"/>
<dbReference type="EMBL" id="CP000076">
    <property type="protein sequence ID" value="AAY91423.1"/>
    <property type="molecule type" value="Genomic_DNA"/>
</dbReference>
<dbReference type="RefSeq" id="WP_011060450.1">
    <property type="nucleotide sequence ID" value="NC_004129.6"/>
</dbReference>
<dbReference type="SMR" id="Q4KES7"/>
<dbReference type="STRING" id="220664.PFL_2149"/>
<dbReference type="KEGG" id="pfl:PFL_2149"/>
<dbReference type="PATRIC" id="fig|220664.5.peg.2178"/>
<dbReference type="eggNOG" id="COG0577">
    <property type="taxonomic scope" value="Bacteria"/>
</dbReference>
<dbReference type="eggNOG" id="COG1136">
    <property type="taxonomic scope" value="Bacteria"/>
</dbReference>
<dbReference type="HOGENOM" id="CLU_000604_78_1_6"/>
<dbReference type="Proteomes" id="UP000008540">
    <property type="component" value="Chromosome"/>
</dbReference>
<dbReference type="GO" id="GO:0005886">
    <property type="term" value="C:plasma membrane"/>
    <property type="evidence" value="ECO:0007669"/>
    <property type="project" value="UniProtKB-SubCell"/>
</dbReference>
<dbReference type="GO" id="GO:0005524">
    <property type="term" value="F:ATP binding"/>
    <property type="evidence" value="ECO:0007669"/>
    <property type="project" value="UniProtKB-KW"/>
</dbReference>
<dbReference type="GO" id="GO:0016887">
    <property type="term" value="F:ATP hydrolysis activity"/>
    <property type="evidence" value="ECO:0007669"/>
    <property type="project" value="InterPro"/>
</dbReference>
<dbReference type="GO" id="GO:0022857">
    <property type="term" value="F:transmembrane transporter activity"/>
    <property type="evidence" value="ECO:0007669"/>
    <property type="project" value="TreeGrafter"/>
</dbReference>
<dbReference type="CDD" id="cd03255">
    <property type="entry name" value="ABC_MJ0796_LolCDE_FtsE"/>
    <property type="match status" value="1"/>
</dbReference>
<dbReference type="FunFam" id="3.40.50.300:FF:000032">
    <property type="entry name" value="Export ABC transporter ATP-binding protein"/>
    <property type="match status" value="1"/>
</dbReference>
<dbReference type="Gene3D" id="3.40.50.300">
    <property type="entry name" value="P-loop containing nucleotide triphosphate hydrolases"/>
    <property type="match status" value="1"/>
</dbReference>
<dbReference type="InterPro" id="IPR003593">
    <property type="entry name" value="AAA+_ATPase"/>
</dbReference>
<dbReference type="InterPro" id="IPR003838">
    <property type="entry name" value="ABC3_permease_C"/>
</dbReference>
<dbReference type="InterPro" id="IPR003439">
    <property type="entry name" value="ABC_transporter-like_ATP-bd"/>
</dbReference>
<dbReference type="InterPro" id="IPR017871">
    <property type="entry name" value="ABC_transporter-like_CS"/>
</dbReference>
<dbReference type="InterPro" id="IPR017911">
    <property type="entry name" value="MacB-like_ATP-bd"/>
</dbReference>
<dbReference type="InterPro" id="IPR025857">
    <property type="entry name" value="MacB_PCD"/>
</dbReference>
<dbReference type="InterPro" id="IPR050250">
    <property type="entry name" value="Macrolide_Exporter_MacB"/>
</dbReference>
<dbReference type="InterPro" id="IPR027417">
    <property type="entry name" value="P-loop_NTPase"/>
</dbReference>
<dbReference type="PANTHER" id="PTHR30572:SF7">
    <property type="entry name" value="MACROLIDE EXPORT ATP-BINDING_PERMEASE PROTEIN MACB"/>
    <property type="match status" value="1"/>
</dbReference>
<dbReference type="PANTHER" id="PTHR30572">
    <property type="entry name" value="MEMBRANE COMPONENT OF TRANSPORTER-RELATED"/>
    <property type="match status" value="1"/>
</dbReference>
<dbReference type="Pfam" id="PF00005">
    <property type="entry name" value="ABC_tran"/>
    <property type="match status" value="1"/>
</dbReference>
<dbReference type="Pfam" id="PF02687">
    <property type="entry name" value="FtsX"/>
    <property type="match status" value="1"/>
</dbReference>
<dbReference type="Pfam" id="PF12704">
    <property type="entry name" value="MacB_PCD"/>
    <property type="match status" value="1"/>
</dbReference>
<dbReference type="SMART" id="SM00382">
    <property type="entry name" value="AAA"/>
    <property type="match status" value="1"/>
</dbReference>
<dbReference type="SUPFAM" id="SSF52540">
    <property type="entry name" value="P-loop containing nucleoside triphosphate hydrolases"/>
    <property type="match status" value="1"/>
</dbReference>
<dbReference type="PROSITE" id="PS00211">
    <property type="entry name" value="ABC_TRANSPORTER_1"/>
    <property type="match status" value="1"/>
</dbReference>
<dbReference type="PROSITE" id="PS50893">
    <property type="entry name" value="ABC_TRANSPORTER_2"/>
    <property type="match status" value="1"/>
</dbReference>
<dbReference type="PROSITE" id="PS51267">
    <property type="entry name" value="MACB"/>
    <property type="match status" value="1"/>
</dbReference>
<gene>
    <name evidence="5" type="ordered locus">PFL_2149</name>
</gene>
<evidence type="ECO:0000250" key="1">
    <source>
        <dbReference type="UniProtKB" id="P75831"/>
    </source>
</evidence>
<evidence type="ECO:0000255" key="2"/>
<evidence type="ECO:0000255" key="3">
    <source>
        <dbReference type="PROSITE-ProRule" id="PRU00434"/>
    </source>
</evidence>
<evidence type="ECO:0000305" key="4"/>
<evidence type="ECO:0000312" key="5">
    <source>
        <dbReference type="EMBL" id="AAY91423.1"/>
    </source>
</evidence>
<sequence>MSEPLLHLTGISRSFTAGDREFLALKHIDLSIQAGEMVAITGASGSGKSTLMNILGCLDYATAGSYKVNGRETRDLDDQALAELRRDYFGFIFQRYHLLPHLSAMHNVEMPAIYAGTPQVRRHGRARELLARLGLSGHLGHRPSQLSGGQQQRVSIARALMNGGEVILADEPTGALDTASGKEVMNILQELHGLGHTVIIVTHDPKVAANAQRIIEVRDGEIVSDRANPRPADEAPSEPPVSVRPAGARRLVASLGLFKEAFVMAWVALVSHRMRTLLTMLGIVIGITSVVSIVAIGEGAKRYVLKDIQAIGSNTIDIFPGASFGDSRAAAIQTLMPADVTALNQLYYVDSATPMVGRSLLLRYGNIDLNATVNGVSHLYFQVRDIKLASGISFSENDARRQAQVVVIDHNTRNRLFGPDVDPLGQVILVGNLPCTVIGVTRENKNMFAASNLLNVWLPYETAAGRVLGQRHLDSISVRIKDGQPSKVVEEHVKKLMEQRHGTKDFFTNNLDSIMQTVQRTSRSLALLLSLIAVISLVVGGIGVMNIMLVSVTERTREIGIRMAVGARQSDIRQQFLVEAVMVCLIGGAIGISLSFAIGYLFTLFIKEWEMVFSMGSIITAFACSTLIGIVFGFVPARNAARLDPIEALARD</sequence>
<protein>
    <recommendedName>
        <fullName evidence="4">Probable export ATP-binding/permease protein PFL_2149</fullName>
        <ecNumber evidence="1">7.6.2.-</ecNumber>
    </recommendedName>
</protein>
<organism>
    <name type="scientific">Pseudomonas fluorescens (strain ATCC BAA-477 / NRRL B-23932 / Pf-5)</name>
    <dbReference type="NCBI Taxonomy" id="220664"/>
    <lineage>
        <taxon>Bacteria</taxon>
        <taxon>Pseudomonadati</taxon>
        <taxon>Pseudomonadota</taxon>
        <taxon>Gammaproteobacteria</taxon>
        <taxon>Pseudomonadales</taxon>
        <taxon>Pseudomonadaceae</taxon>
        <taxon>Pseudomonas</taxon>
    </lineage>
</organism>
<proteinExistence type="inferred from homology"/>
<accession>Q4KES7</accession>
<reference key="1">
    <citation type="journal article" date="2005" name="Nat. Biotechnol.">
        <title>Complete genome sequence of the plant commensal Pseudomonas fluorescens Pf-5.</title>
        <authorList>
            <person name="Paulsen I.T."/>
            <person name="Press C.M."/>
            <person name="Ravel J."/>
            <person name="Kobayashi D.Y."/>
            <person name="Myers G.S.A."/>
            <person name="Mavrodi D.V."/>
            <person name="DeBoy R.T."/>
            <person name="Seshadri R."/>
            <person name="Ren Q."/>
            <person name="Madupu R."/>
            <person name="Dodson R.J."/>
            <person name="Durkin A.S."/>
            <person name="Brinkac L.M."/>
            <person name="Daugherty S.C."/>
            <person name="Sullivan S.A."/>
            <person name="Rosovitz M.J."/>
            <person name="Gwinn M.L."/>
            <person name="Zhou L."/>
            <person name="Schneider D.J."/>
            <person name="Cartinhour S.W."/>
            <person name="Nelson W.C."/>
            <person name="Weidman J."/>
            <person name="Watkins K."/>
            <person name="Tran K."/>
            <person name="Khouri H."/>
            <person name="Pierson E.A."/>
            <person name="Pierson L.S. III"/>
            <person name="Thomashow L.S."/>
            <person name="Loper J.E."/>
        </authorList>
    </citation>
    <scope>NUCLEOTIDE SEQUENCE [LARGE SCALE GENOMIC DNA]</scope>
    <source>
        <strain>ATCC BAA-477 / NRRL B-23932 / Pf-5</strain>
    </source>
</reference>
<keyword id="KW-0067">ATP-binding</keyword>
<keyword id="KW-0997">Cell inner membrane</keyword>
<keyword id="KW-1003">Cell membrane</keyword>
<keyword id="KW-0472">Membrane</keyword>
<keyword id="KW-0547">Nucleotide-binding</keyword>
<keyword id="KW-1278">Translocase</keyword>
<keyword id="KW-0812">Transmembrane</keyword>
<keyword id="KW-1133">Transmembrane helix</keyword>
<keyword id="KW-0813">Transport</keyword>